<gene>
    <name evidence="1" type="primary">groES</name>
    <name evidence="1" type="synonym">groS</name>
    <name type="ordered locus">LGAS_0408</name>
</gene>
<reference key="1">
    <citation type="journal article" date="2006" name="Proc. Natl. Acad. Sci. U.S.A.">
        <title>Comparative genomics of the lactic acid bacteria.</title>
        <authorList>
            <person name="Makarova K.S."/>
            <person name="Slesarev A."/>
            <person name="Wolf Y.I."/>
            <person name="Sorokin A."/>
            <person name="Mirkin B."/>
            <person name="Koonin E.V."/>
            <person name="Pavlov A."/>
            <person name="Pavlova N."/>
            <person name="Karamychev V."/>
            <person name="Polouchine N."/>
            <person name="Shakhova V."/>
            <person name="Grigoriev I."/>
            <person name="Lou Y."/>
            <person name="Rohksar D."/>
            <person name="Lucas S."/>
            <person name="Huang K."/>
            <person name="Goodstein D.M."/>
            <person name="Hawkins T."/>
            <person name="Plengvidhya V."/>
            <person name="Welker D."/>
            <person name="Hughes J."/>
            <person name="Goh Y."/>
            <person name="Benson A."/>
            <person name="Baldwin K."/>
            <person name="Lee J.-H."/>
            <person name="Diaz-Muniz I."/>
            <person name="Dosti B."/>
            <person name="Smeianov V."/>
            <person name="Wechter W."/>
            <person name="Barabote R."/>
            <person name="Lorca G."/>
            <person name="Altermann E."/>
            <person name="Barrangou R."/>
            <person name="Ganesan B."/>
            <person name="Xie Y."/>
            <person name="Rawsthorne H."/>
            <person name="Tamir D."/>
            <person name="Parker C."/>
            <person name="Breidt F."/>
            <person name="Broadbent J.R."/>
            <person name="Hutkins R."/>
            <person name="O'Sullivan D."/>
            <person name="Steele J."/>
            <person name="Unlu G."/>
            <person name="Saier M.H. Jr."/>
            <person name="Klaenhammer T."/>
            <person name="Richardson P."/>
            <person name="Kozyavkin S."/>
            <person name="Weimer B.C."/>
            <person name="Mills D.A."/>
        </authorList>
    </citation>
    <scope>NUCLEOTIDE SEQUENCE [LARGE SCALE GENOMIC DNA]</scope>
    <source>
        <strain>ATCC 33323 / DSM 20243 / BCRC 14619 / CIP 102991 / JCM 1131 / KCTC 3163 / NCIMB 11718 / NCTC 13722 / AM63</strain>
    </source>
</reference>
<keyword id="KW-0143">Chaperone</keyword>
<keyword id="KW-0963">Cytoplasm</keyword>
<feature type="chain" id="PRO_1000025284" description="Co-chaperonin GroES">
    <location>
        <begin position="1"/>
        <end position="94"/>
    </location>
</feature>
<protein>
    <recommendedName>
        <fullName evidence="1">Co-chaperonin GroES</fullName>
    </recommendedName>
    <alternativeName>
        <fullName evidence="1">10 kDa chaperonin</fullName>
    </alternativeName>
    <alternativeName>
        <fullName evidence="1">Chaperonin-10</fullName>
        <shortName evidence="1">Cpn10</shortName>
    </alternativeName>
</protein>
<proteinExistence type="inferred from homology"/>
<organism>
    <name type="scientific">Lactobacillus gasseri (strain ATCC 33323 / DSM 20243 / BCRC 14619 / CIP 102991 / JCM 1131 / KCTC 3163 / NCIMB 11718 / NCTC 13722 / AM63)</name>
    <dbReference type="NCBI Taxonomy" id="324831"/>
    <lineage>
        <taxon>Bacteria</taxon>
        <taxon>Bacillati</taxon>
        <taxon>Bacillota</taxon>
        <taxon>Bacilli</taxon>
        <taxon>Lactobacillales</taxon>
        <taxon>Lactobacillaceae</taxon>
        <taxon>Lactobacillus</taxon>
    </lineage>
</organism>
<accession>Q045Q9</accession>
<sequence>MLQPIGDRVIVKVKDEEEEKVGGIVLASNAKEKPQMGEIIAVGNGKRNANGDLIPMSVAKGETVFFDKYSGTNLKYEGEKYLVLRESDLLAVVK</sequence>
<dbReference type="EMBL" id="CP000413">
    <property type="protein sequence ID" value="ABJ59813.1"/>
    <property type="molecule type" value="Genomic_DNA"/>
</dbReference>
<dbReference type="RefSeq" id="WP_003647727.1">
    <property type="nucleotide sequence ID" value="NZ_WBMG01000001.1"/>
</dbReference>
<dbReference type="SMR" id="Q045Q9"/>
<dbReference type="GeneID" id="83569886"/>
<dbReference type="KEGG" id="lga:LGAS_0408"/>
<dbReference type="HOGENOM" id="CLU_132825_2_1_9"/>
<dbReference type="BioCyc" id="LGAS324831:G1G6Y-407-MONOMER"/>
<dbReference type="Proteomes" id="UP000000664">
    <property type="component" value="Chromosome"/>
</dbReference>
<dbReference type="GO" id="GO:0005737">
    <property type="term" value="C:cytoplasm"/>
    <property type="evidence" value="ECO:0007669"/>
    <property type="project" value="UniProtKB-SubCell"/>
</dbReference>
<dbReference type="GO" id="GO:0005524">
    <property type="term" value="F:ATP binding"/>
    <property type="evidence" value="ECO:0007669"/>
    <property type="project" value="InterPro"/>
</dbReference>
<dbReference type="GO" id="GO:0046872">
    <property type="term" value="F:metal ion binding"/>
    <property type="evidence" value="ECO:0007669"/>
    <property type="project" value="TreeGrafter"/>
</dbReference>
<dbReference type="GO" id="GO:0044183">
    <property type="term" value="F:protein folding chaperone"/>
    <property type="evidence" value="ECO:0007669"/>
    <property type="project" value="InterPro"/>
</dbReference>
<dbReference type="GO" id="GO:0051087">
    <property type="term" value="F:protein-folding chaperone binding"/>
    <property type="evidence" value="ECO:0007669"/>
    <property type="project" value="TreeGrafter"/>
</dbReference>
<dbReference type="GO" id="GO:0051082">
    <property type="term" value="F:unfolded protein binding"/>
    <property type="evidence" value="ECO:0007669"/>
    <property type="project" value="TreeGrafter"/>
</dbReference>
<dbReference type="GO" id="GO:0051085">
    <property type="term" value="P:chaperone cofactor-dependent protein refolding"/>
    <property type="evidence" value="ECO:0007669"/>
    <property type="project" value="TreeGrafter"/>
</dbReference>
<dbReference type="CDD" id="cd00320">
    <property type="entry name" value="cpn10"/>
    <property type="match status" value="1"/>
</dbReference>
<dbReference type="FunFam" id="2.30.33.40:FF:000001">
    <property type="entry name" value="10 kDa chaperonin"/>
    <property type="match status" value="1"/>
</dbReference>
<dbReference type="Gene3D" id="2.30.33.40">
    <property type="entry name" value="GroES chaperonin"/>
    <property type="match status" value="1"/>
</dbReference>
<dbReference type="HAMAP" id="MF_00580">
    <property type="entry name" value="CH10"/>
    <property type="match status" value="1"/>
</dbReference>
<dbReference type="InterPro" id="IPR020818">
    <property type="entry name" value="Chaperonin_GroES"/>
</dbReference>
<dbReference type="InterPro" id="IPR037124">
    <property type="entry name" value="Chaperonin_GroES_sf"/>
</dbReference>
<dbReference type="InterPro" id="IPR018369">
    <property type="entry name" value="Chaprnonin_Cpn10_CS"/>
</dbReference>
<dbReference type="InterPro" id="IPR011032">
    <property type="entry name" value="GroES-like_sf"/>
</dbReference>
<dbReference type="NCBIfam" id="NF001531">
    <property type="entry name" value="PRK00364.2-2"/>
    <property type="match status" value="1"/>
</dbReference>
<dbReference type="NCBIfam" id="NF001533">
    <property type="entry name" value="PRK00364.2-4"/>
    <property type="match status" value="1"/>
</dbReference>
<dbReference type="NCBIfam" id="NF001534">
    <property type="entry name" value="PRK00364.2-5"/>
    <property type="match status" value="1"/>
</dbReference>
<dbReference type="PANTHER" id="PTHR10772">
    <property type="entry name" value="10 KDA HEAT SHOCK PROTEIN"/>
    <property type="match status" value="1"/>
</dbReference>
<dbReference type="PANTHER" id="PTHR10772:SF58">
    <property type="entry name" value="CO-CHAPERONIN GROES"/>
    <property type="match status" value="1"/>
</dbReference>
<dbReference type="Pfam" id="PF00166">
    <property type="entry name" value="Cpn10"/>
    <property type="match status" value="1"/>
</dbReference>
<dbReference type="PRINTS" id="PR00297">
    <property type="entry name" value="CHAPERONIN10"/>
</dbReference>
<dbReference type="SMART" id="SM00883">
    <property type="entry name" value="Cpn10"/>
    <property type="match status" value="1"/>
</dbReference>
<dbReference type="SUPFAM" id="SSF50129">
    <property type="entry name" value="GroES-like"/>
    <property type="match status" value="1"/>
</dbReference>
<dbReference type="PROSITE" id="PS00681">
    <property type="entry name" value="CHAPERONINS_CPN10"/>
    <property type="match status" value="1"/>
</dbReference>
<name>CH10_LACGA</name>
<comment type="function">
    <text evidence="1">Together with the chaperonin GroEL, plays an essential role in assisting protein folding. The GroEL-GroES system forms a nano-cage that allows encapsulation of the non-native substrate proteins and provides a physical environment optimized to promote and accelerate protein folding. GroES binds to the apical surface of the GroEL ring, thereby capping the opening of the GroEL channel.</text>
</comment>
<comment type="subunit">
    <text evidence="1">Heptamer of 7 subunits arranged in a ring. Interacts with the chaperonin GroEL.</text>
</comment>
<comment type="subcellular location">
    <subcellularLocation>
        <location evidence="1">Cytoplasm</location>
    </subcellularLocation>
</comment>
<comment type="similarity">
    <text evidence="1">Belongs to the GroES chaperonin family.</text>
</comment>
<evidence type="ECO:0000255" key="1">
    <source>
        <dbReference type="HAMAP-Rule" id="MF_00580"/>
    </source>
</evidence>